<sequence>MEYRSLTLDDFLSRFQLLRPQINRETLNHRQAAVLIPIVRRPQPGLLLTQRSIHLRKHAGQVAFPGGAVDDTDASVIAAALREAEEEVAIPPSAVEVIGVLPPVDSVTGYQVTPVVGIIPPDLPYRASEDEVSAVFEMPLAQALHLGRYHPLDIYRRGDSHRVWLSWYEQYFVWGMTAGIIRELALQIGVKP</sequence>
<protein>
    <recommendedName>
        <fullName evidence="1">Uncharacterized Nudix hydrolase NudL</fullName>
        <ecNumber evidence="1">3.6.1.-</ecNumber>
    </recommendedName>
</protein>
<proteinExistence type="inferred from homology"/>
<organism>
    <name type="scientific">Escherichia coli O157:H7 (strain EC4115 / EHEC)</name>
    <dbReference type="NCBI Taxonomy" id="444450"/>
    <lineage>
        <taxon>Bacteria</taxon>
        <taxon>Pseudomonadati</taxon>
        <taxon>Pseudomonadota</taxon>
        <taxon>Gammaproteobacteria</taxon>
        <taxon>Enterobacterales</taxon>
        <taxon>Enterobacteriaceae</taxon>
        <taxon>Escherichia</taxon>
    </lineage>
</organism>
<accession>B5YQV4</accession>
<keyword id="KW-0378">Hydrolase</keyword>
<keyword id="KW-0460">Magnesium</keyword>
<keyword id="KW-0464">Manganese</keyword>
<keyword id="KW-0479">Metal-binding</keyword>
<evidence type="ECO:0000255" key="1">
    <source>
        <dbReference type="HAMAP-Rule" id="MF_01592"/>
    </source>
</evidence>
<comment type="function">
    <text evidence="1">Probably mediates the hydrolysis of some nucleoside diphosphate derivatives.</text>
</comment>
<comment type="cofactor">
    <cofactor evidence="1">
        <name>Mn(2+)</name>
        <dbReference type="ChEBI" id="CHEBI:29035"/>
    </cofactor>
    <cofactor evidence="1">
        <name>Mg(2+)</name>
        <dbReference type="ChEBI" id="CHEBI:18420"/>
    </cofactor>
</comment>
<comment type="similarity">
    <text evidence="1">Belongs to the Nudix hydrolase family. PCD1 subfamily.</text>
</comment>
<reference key="1">
    <citation type="journal article" date="2011" name="Proc. Natl. Acad. Sci. U.S.A.">
        <title>Genomic anatomy of Escherichia coli O157:H7 outbreaks.</title>
        <authorList>
            <person name="Eppinger M."/>
            <person name="Mammel M.K."/>
            <person name="Leclerc J.E."/>
            <person name="Ravel J."/>
            <person name="Cebula T.A."/>
        </authorList>
    </citation>
    <scope>NUCLEOTIDE SEQUENCE [LARGE SCALE GENOMIC DNA]</scope>
    <source>
        <strain>EC4115 / EHEC</strain>
    </source>
</reference>
<name>NUDL_ECO5E</name>
<gene>
    <name evidence="1" type="primary">nudL</name>
    <name type="ordered locus">ECH74115_2542</name>
</gene>
<feature type="chain" id="PRO_1000147813" description="Uncharacterized Nudix hydrolase NudL">
    <location>
        <begin position="1"/>
        <end position="192"/>
    </location>
</feature>
<feature type="domain" description="Nudix hydrolase" evidence="1">
    <location>
        <begin position="29"/>
        <end position="160"/>
    </location>
</feature>
<feature type="short sequence motif" description="Nudix box">
    <location>
        <begin position="67"/>
        <end position="89"/>
    </location>
</feature>
<feature type="binding site" evidence="1">
    <location>
        <position position="83"/>
    </location>
    <ligand>
        <name>Mg(2+)</name>
        <dbReference type="ChEBI" id="CHEBI:18420"/>
    </ligand>
</feature>
<feature type="binding site" evidence="1">
    <location>
        <position position="87"/>
    </location>
    <ligand>
        <name>Mg(2+)</name>
        <dbReference type="ChEBI" id="CHEBI:18420"/>
    </ligand>
</feature>
<dbReference type="EC" id="3.6.1.-" evidence="1"/>
<dbReference type="EMBL" id="CP001164">
    <property type="protein sequence ID" value="ACI36190.1"/>
    <property type="molecule type" value="Genomic_DNA"/>
</dbReference>
<dbReference type="RefSeq" id="WP_000456725.1">
    <property type="nucleotide sequence ID" value="NC_011353.1"/>
</dbReference>
<dbReference type="SMR" id="B5YQV4"/>
<dbReference type="KEGG" id="ecf:ECH74115_2542"/>
<dbReference type="HOGENOM" id="CLU_040940_5_2_6"/>
<dbReference type="GO" id="GO:0010945">
    <property type="term" value="F:coenzyme A diphosphatase activity"/>
    <property type="evidence" value="ECO:0007669"/>
    <property type="project" value="InterPro"/>
</dbReference>
<dbReference type="GO" id="GO:0000287">
    <property type="term" value="F:magnesium ion binding"/>
    <property type="evidence" value="ECO:0007669"/>
    <property type="project" value="UniProtKB-UniRule"/>
</dbReference>
<dbReference type="GO" id="GO:0030145">
    <property type="term" value="F:manganese ion binding"/>
    <property type="evidence" value="ECO:0007669"/>
    <property type="project" value="UniProtKB-UniRule"/>
</dbReference>
<dbReference type="GO" id="GO:0009132">
    <property type="term" value="P:nucleoside diphosphate metabolic process"/>
    <property type="evidence" value="ECO:0007669"/>
    <property type="project" value="InterPro"/>
</dbReference>
<dbReference type="CDD" id="cd03426">
    <property type="entry name" value="NUDIX_CoAse_Nudt7"/>
    <property type="match status" value="1"/>
</dbReference>
<dbReference type="FunFam" id="3.90.79.10:FF:000013">
    <property type="entry name" value="Uncharacterized Nudix hydrolase NudL"/>
    <property type="match status" value="1"/>
</dbReference>
<dbReference type="Gene3D" id="3.90.79.10">
    <property type="entry name" value="Nucleoside Triphosphate Pyrophosphohydrolase"/>
    <property type="match status" value="1"/>
</dbReference>
<dbReference type="HAMAP" id="MF_01592">
    <property type="entry name" value="Nudix_NudL"/>
    <property type="match status" value="1"/>
</dbReference>
<dbReference type="InterPro" id="IPR045121">
    <property type="entry name" value="CoAse"/>
</dbReference>
<dbReference type="InterPro" id="IPR015797">
    <property type="entry name" value="NUDIX_hydrolase-like_dom_sf"/>
</dbReference>
<dbReference type="InterPro" id="IPR000086">
    <property type="entry name" value="NUDIX_hydrolase_dom"/>
</dbReference>
<dbReference type="InterPro" id="IPR000059">
    <property type="entry name" value="NUDIX_hydrolase_NudL_CS"/>
</dbReference>
<dbReference type="InterPro" id="IPR023735">
    <property type="entry name" value="Nudix_NudL"/>
</dbReference>
<dbReference type="NCBIfam" id="NF007980">
    <property type="entry name" value="PRK10707.1"/>
    <property type="match status" value="1"/>
</dbReference>
<dbReference type="PANTHER" id="PTHR12992:SF11">
    <property type="entry name" value="MITOCHONDRIAL COENZYME A DIPHOSPHATASE NUDT8"/>
    <property type="match status" value="1"/>
</dbReference>
<dbReference type="PANTHER" id="PTHR12992">
    <property type="entry name" value="NUDIX HYDROLASE"/>
    <property type="match status" value="1"/>
</dbReference>
<dbReference type="Pfam" id="PF00293">
    <property type="entry name" value="NUDIX"/>
    <property type="match status" value="1"/>
</dbReference>
<dbReference type="SUPFAM" id="SSF55811">
    <property type="entry name" value="Nudix"/>
    <property type="match status" value="1"/>
</dbReference>
<dbReference type="PROSITE" id="PS51462">
    <property type="entry name" value="NUDIX"/>
    <property type="match status" value="1"/>
</dbReference>
<dbReference type="PROSITE" id="PS01293">
    <property type="entry name" value="NUDIX_COA"/>
    <property type="match status" value="1"/>
</dbReference>